<organism>
    <name type="scientific">Anaerobiospirillum succiniciproducens</name>
    <dbReference type="NCBI Taxonomy" id="13335"/>
    <lineage>
        <taxon>Bacteria</taxon>
        <taxon>Pseudomonadati</taxon>
        <taxon>Pseudomonadota</taxon>
        <taxon>Gammaproteobacteria</taxon>
        <taxon>Aeromonadales</taxon>
        <taxon>Succinivibrionaceae</taxon>
        <taxon>Anaerobiospirillum</taxon>
    </lineage>
</organism>
<reference key="1">
    <citation type="journal article" date="1997" name="Appl. Environ. Microbiol.">
        <title>Cloning, sequencing, and overexpression of the Anaerobiospirillum succiniciproducens phosphoenolpyruvate carboxykinase (pckA) gene.</title>
        <authorList>
            <person name="Laivenieks M."/>
            <person name="Vieille C."/>
            <person name="Zeikus J.G."/>
        </authorList>
    </citation>
    <scope>NUCLEOTIDE SEQUENCE [GENOMIC DNA]</scope>
    <scope>FUNCTION</scope>
    <scope>CATALYTIC ACTIVITY</scope>
    <scope>BIOPHYSICOCHEMICAL PROPERTIES</scope>
    <source>
        <strain>ATCC 29305 / DSM 6400 / LMG 7826 / NCTC 11536 / S411</strain>
    </source>
</reference>
<reference key="2">
    <citation type="journal article" date="1993" name="J. Gen. Microbiol.">
        <title>Purification and characterization of phosphoenolpyruvate carboxykinase,a catabolic CO2-fixing enzyme, from Anaerobiospirillum succiniciproducens.</title>
        <authorList>
            <person name="Podkovyrov S.M."/>
            <person name="Zeikus J.G."/>
        </authorList>
    </citation>
    <scope>PROTEIN SEQUENCE OF 2-19</scope>
    <scope>FUNCTION</scope>
    <scope>CATALYTIC ACTIVITY</scope>
    <scope>BIOPHYSICOCHEMICAL PROPERTIES</scope>
    <scope>ACTIVITY REGULATION</scope>
    <scope>COFACTOR</scope>
    <scope>SUBUNIT</scope>
</reference>
<reference key="3">
    <citation type="journal article" date="2005" name="Int. J. Biochem. Cell Biol.">
        <title>Crystal structure of Anaerobiospirillum succiniciproducens PEP carboxykinase reveals an important active site loop.</title>
        <authorList>
            <person name="Cotelesage J.J."/>
            <person name="Prasad L."/>
            <person name="Zeikus J.G."/>
            <person name="Laivenieks M."/>
            <person name="Delbaere L.T."/>
        </authorList>
    </citation>
    <scope>X-RAY CRYSTALLOGRAPHY (2.20 ANGSTROMS) IN COMPLEX WITH ATP; MANGANESE AND SUBSTRATE ANALOGS</scope>
</reference>
<keyword id="KW-0002">3D-structure</keyword>
<keyword id="KW-0067">ATP-binding</keyword>
<keyword id="KW-0963">Cytoplasm</keyword>
<keyword id="KW-0210">Decarboxylase</keyword>
<keyword id="KW-0903">Direct protein sequencing</keyword>
<keyword id="KW-0312">Gluconeogenesis</keyword>
<keyword id="KW-0456">Lyase</keyword>
<keyword id="KW-0464">Manganese</keyword>
<keyword id="KW-0479">Metal-binding</keyword>
<keyword id="KW-0547">Nucleotide-binding</keyword>
<gene>
    <name evidence="2" type="primary">pckA</name>
</gene>
<comment type="function">
    <text evidence="1 4 5">Involved in gluconeogenesis. Catalyzes the conversion of oxaloacetate (OAA) to phosphoenolpyruvate (PEP) through direct phosphoryl transfer between the nucleoside triphosphate and OAA (By similarity).</text>
</comment>
<comment type="catalytic activity">
    <reaction evidence="2 4 5">
        <text>oxaloacetate + ATP = phosphoenolpyruvate + ADP + CO2</text>
        <dbReference type="Rhea" id="RHEA:18617"/>
        <dbReference type="ChEBI" id="CHEBI:16452"/>
        <dbReference type="ChEBI" id="CHEBI:16526"/>
        <dbReference type="ChEBI" id="CHEBI:30616"/>
        <dbReference type="ChEBI" id="CHEBI:58702"/>
        <dbReference type="ChEBI" id="CHEBI:456216"/>
        <dbReference type="EC" id="4.1.1.49"/>
    </reaction>
</comment>
<comment type="cofactor">
    <cofactor evidence="2 4">
        <name>Mn(2+)</name>
        <dbReference type="ChEBI" id="CHEBI:29035"/>
    </cofactor>
    <text evidence="2 4">Binds 1 Mn(2+) ion per subunit.</text>
</comment>
<comment type="activity regulation">
    <text evidence="4">Inhibited by p-chloromercuribenzoate.</text>
</comment>
<comment type="biophysicochemical properties">
    <kinetics>
        <KM evidence="4 5">0.42 mM for ADP (at 37 degrees Celsius and at pH 6.2)</KM>
        <KM evidence="4 5">0.54 mM for PEP (at 37 degrees Celsius and at pH 6.2)</KM>
        <KM evidence="4 5">1.2 mM for OAA (at 37 degrees Celsius and at pH 6.2)</KM>
        <KM evidence="4 5">2.3 mM for ATP (at 37 degrees Celsius and at pH 6.2)</KM>
        <KM evidence="4 5">17 mM for bicarbonate (at 37 degrees Celsius and at pH 6.2)</KM>
        <Vmax evidence="4 5">10.0 umol/min/mg enzyme (at 37 degrees Celsius and at pH 6.2)</Vmax>
    </kinetics>
    <phDependence>
        <text evidence="4 5">Optimum pH is between 6.7 and 7.1. The enzyme is stable from pH 5.0 to 9.0. It completely losing activity at pH values lower than 4.5 and retaining some activity in the pH range 9-12.</text>
    </phDependence>
</comment>
<comment type="pathway">
    <text evidence="2">Carbohydrate biosynthesis; gluconeogenesis.</text>
</comment>
<comment type="subunit">
    <text evidence="2 3 4">Monomer.</text>
</comment>
<comment type="subcellular location">
    <subcellularLocation>
        <location evidence="2">Cytoplasm</location>
    </subcellularLocation>
</comment>
<comment type="similarity">
    <text evidence="2">Belongs to the phosphoenolpyruvate carboxykinase (ATP) family.</text>
</comment>
<feature type="initiator methionine" description="Removed" evidence="4">
    <location>
        <position position="1"/>
    </location>
</feature>
<feature type="chain" id="PRO_0000203801" description="Phosphoenolpyruvate carboxykinase (ATP)">
    <location>
        <begin position="2"/>
        <end position="532"/>
    </location>
</feature>
<feature type="binding site">
    <location>
        <position position="60"/>
    </location>
    <ligand>
        <name>substrate</name>
    </ligand>
</feature>
<feature type="binding site" evidence="2">
    <location>
        <position position="200"/>
    </location>
    <ligand>
        <name>substrate</name>
    </ligand>
</feature>
<feature type="binding site" evidence="2">
    <location>
        <position position="206"/>
    </location>
    <ligand>
        <name>ATP</name>
        <dbReference type="ChEBI" id="CHEBI:30616"/>
    </ligand>
</feature>
<feature type="binding site" evidence="2 3">
    <location>
        <position position="206"/>
    </location>
    <ligand>
        <name>Mn(2+)</name>
        <dbReference type="ChEBI" id="CHEBI:29035"/>
    </ligand>
</feature>
<feature type="binding site" evidence="2">
    <location>
        <position position="206"/>
    </location>
    <ligand>
        <name>substrate</name>
    </ligand>
</feature>
<feature type="binding site" evidence="2">
    <location>
        <position position="225"/>
    </location>
    <ligand>
        <name>ATP</name>
        <dbReference type="ChEBI" id="CHEBI:30616"/>
    </ligand>
</feature>
<feature type="binding site" evidence="2 3">
    <location>
        <position position="225"/>
    </location>
    <ligand>
        <name>Mn(2+)</name>
        <dbReference type="ChEBI" id="CHEBI:29035"/>
    </ligand>
</feature>
<feature type="binding site" evidence="6">
    <location>
        <begin position="242"/>
        <end position="250"/>
    </location>
    <ligand>
        <name>ATP</name>
        <dbReference type="ChEBI" id="CHEBI:30616"/>
    </ligand>
</feature>
<feature type="binding site">
    <location>
        <position position="244"/>
    </location>
    <ligand>
        <name>substrate</name>
    </ligand>
</feature>
<feature type="binding site" evidence="2 3">
    <location>
        <position position="263"/>
    </location>
    <ligand>
        <name>Mn(2+)</name>
        <dbReference type="ChEBI" id="CHEBI:29035"/>
    </ligand>
</feature>
<feature type="binding site" evidence="2">
    <location>
        <position position="291"/>
    </location>
    <ligand>
        <name>ATP</name>
        <dbReference type="ChEBI" id="CHEBI:30616"/>
    </ligand>
</feature>
<feature type="binding site" evidence="2 3">
    <location>
        <position position="327"/>
    </location>
    <ligand>
        <name>ATP</name>
        <dbReference type="ChEBI" id="CHEBI:30616"/>
    </ligand>
</feature>
<feature type="binding site" evidence="2">
    <location>
        <position position="327"/>
    </location>
    <ligand>
        <name>substrate</name>
    </ligand>
</feature>
<feature type="binding site" evidence="2 3">
    <location>
        <begin position="443"/>
        <end position="444"/>
    </location>
    <ligand>
        <name>ATP</name>
        <dbReference type="ChEBI" id="CHEBI:30616"/>
    </ligand>
</feature>
<feature type="binding site" evidence="2 3">
    <location>
        <position position="449"/>
    </location>
    <ligand>
        <name>ATP</name>
        <dbReference type="ChEBI" id="CHEBI:30616"/>
    </ligand>
</feature>
<feature type="helix" evidence="7">
    <location>
        <begin position="3"/>
        <end position="9"/>
    </location>
</feature>
<feature type="strand" evidence="7">
    <location>
        <begin position="16"/>
        <end position="21"/>
    </location>
</feature>
<feature type="helix" evidence="7">
    <location>
        <begin position="24"/>
        <end position="31"/>
    </location>
</feature>
<feature type="helix" evidence="7">
    <location>
        <begin position="38"/>
        <end position="40"/>
    </location>
</feature>
<feature type="strand" evidence="7">
    <location>
        <begin position="42"/>
        <end position="44"/>
    </location>
</feature>
<feature type="strand" evidence="7">
    <location>
        <begin position="48"/>
        <end position="52"/>
    </location>
</feature>
<feature type="helix" evidence="7">
    <location>
        <begin position="62"/>
        <end position="64"/>
    </location>
</feature>
<feature type="strand" evidence="7">
    <location>
        <begin position="65"/>
        <end position="68"/>
    </location>
</feature>
<feature type="helix" evidence="7">
    <location>
        <begin position="71"/>
        <end position="73"/>
    </location>
</feature>
<feature type="strand" evidence="7">
    <location>
        <begin position="81"/>
        <end position="83"/>
    </location>
</feature>
<feature type="strand" evidence="7">
    <location>
        <begin position="88"/>
        <end position="90"/>
    </location>
</feature>
<feature type="helix" evidence="7">
    <location>
        <begin position="92"/>
        <end position="106"/>
    </location>
</feature>
<feature type="strand" evidence="7">
    <location>
        <begin position="107"/>
        <end position="120"/>
    </location>
</feature>
<feature type="turn" evidence="7">
    <location>
        <begin position="122"/>
        <end position="124"/>
    </location>
</feature>
<feature type="strand" evidence="7">
    <location>
        <begin position="126"/>
        <end position="133"/>
    </location>
</feature>
<feature type="helix" evidence="7">
    <location>
        <begin position="135"/>
        <end position="144"/>
    </location>
</feature>
<feature type="helix" evidence="7">
    <location>
        <begin position="150"/>
        <end position="153"/>
    </location>
</feature>
<feature type="strand" evidence="7">
    <location>
        <begin position="159"/>
        <end position="165"/>
    </location>
</feature>
<feature type="turn" evidence="7">
    <location>
        <begin position="171"/>
        <end position="177"/>
    </location>
</feature>
<feature type="strand" evidence="7">
    <location>
        <begin position="179"/>
        <end position="181"/>
    </location>
</feature>
<feature type="strand" evidence="7">
    <location>
        <begin position="183"/>
        <end position="187"/>
    </location>
</feature>
<feature type="turn" evidence="7">
    <location>
        <begin position="188"/>
        <end position="191"/>
    </location>
</feature>
<feature type="strand" evidence="7">
    <location>
        <begin position="192"/>
        <end position="197"/>
    </location>
</feature>
<feature type="helix" evidence="7">
    <location>
        <begin position="203"/>
        <end position="215"/>
    </location>
</feature>
<feature type="helix" evidence="7">
    <location>
        <begin position="217"/>
        <end position="219"/>
    </location>
</feature>
<feature type="strand" evidence="7">
    <location>
        <begin position="222"/>
        <end position="231"/>
    </location>
</feature>
<feature type="strand" evidence="7">
    <location>
        <begin position="236"/>
        <end position="241"/>
    </location>
</feature>
<feature type="helix" evidence="7">
    <location>
        <begin position="248"/>
        <end position="252"/>
    </location>
</feature>
<feature type="strand" evidence="7">
    <location>
        <begin position="257"/>
        <end position="267"/>
    </location>
</feature>
<feature type="strand" evidence="7">
    <location>
        <begin position="272"/>
        <end position="275"/>
    </location>
</feature>
<feature type="strand" evidence="7">
    <location>
        <begin position="277"/>
        <end position="282"/>
    </location>
</feature>
<feature type="turn" evidence="7">
    <location>
        <begin position="288"/>
        <end position="290"/>
    </location>
</feature>
<feature type="helix" evidence="7">
    <location>
        <begin position="292"/>
        <end position="297"/>
    </location>
</feature>
<feature type="strand" evidence="7">
    <location>
        <begin position="303"/>
        <end position="306"/>
    </location>
</feature>
<feature type="strand" evidence="7">
    <location>
        <begin position="327"/>
        <end position="331"/>
    </location>
</feature>
<feature type="helix" evidence="7">
    <location>
        <begin position="332"/>
        <end position="334"/>
    </location>
</feature>
<feature type="strand" evidence="7">
    <location>
        <begin position="335"/>
        <end position="338"/>
    </location>
</feature>
<feature type="strand" evidence="7">
    <location>
        <begin position="341"/>
        <end position="346"/>
    </location>
</feature>
<feature type="strand" evidence="7">
    <location>
        <begin position="348"/>
        <end position="355"/>
    </location>
</feature>
<feature type="strand" evidence="7">
    <location>
        <begin position="364"/>
        <end position="367"/>
    </location>
</feature>
<feature type="helix" evidence="7">
    <location>
        <begin position="370"/>
        <end position="379"/>
    </location>
</feature>
<feature type="strand" evidence="7">
    <location>
        <begin position="381"/>
        <end position="384"/>
    </location>
</feature>
<feature type="strand" evidence="7">
    <location>
        <begin position="396"/>
        <end position="399"/>
    </location>
</feature>
<feature type="helix" evidence="7">
    <location>
        <begin position="401"/>
        <end position="403"/>
    </location>
</feature>
<feature type="helix" evidence="7">
    <location>
        <begin position="405"/>
        <end position="407"/>
    </location>
</feature>
<feature type="helix" evidence="7">
    <location>
        <begin position="412"/>
        <end position="426"/>
    </location>
</feature>
<feature type="strand" evidence="7">
    <location>
        <begin position="429"/>
        <end position="434"/>
    </location>
</feature>
<feature type="strand" evidence="7">
    <location>
        <begin position="441"/>
        <end position="443"/>
    </location>
</feature>
<feature type="helix" evidence="7">
    <location>
        <begin position="446"/>
        <end position="457"/>
    </location>
</feature>
<feature type="helix" evidence="7">
    <location>
        <begin position="460"/>
        <end position="463"/>
    </location>
</feature>
<feature type="strand" evidence="7">
    <location>
        <begin position="466"/>
        <end position="469"/>
    </location>
</feature>
<feature type="turn" evidence="7">
    <location>
        <begin position="470"/>
        <end position="473"/>
    </location>
</feature>
<feature type="strand" evidence="7">
    <location>
        <begin position="474"/>
        <end position="478"/>
    </location>
</feature>
<feature type="helix" evidence="7">
    <location>
        <begin position="486"/>
        <end position="488"/>
    </location>
</feature>
<feature type="helix" evidence="7">
    <location>
        <begin position="490"/>
        <end position="493"/>
    </location>
</feature>
<feature type="strand" evidence="7">
    <location>
        <begin position="494"/>
        <end position="496"/>
    </location>
</feature>
<feature type="helix" evidence="7">
    <location>
        <begin position="497"/>
        <end position="515"/>
    </location>
</feature>
<proteinExistence type="evidence at protein level"/>
<name>PCKA_ANASU</name>
<accession>O09460</accession>
<dbReference type="EC" id="4.1.1.49" evidence="2"/>
<dbReference type="EMBL" id="U95960">
    <property type="protein sequence ID" value="AAC45394.1"/>
    <property type="molecule type" value="Genomic_DNA"/>
</dbReference>
<dbReference type="PDB" id="1YTM">
    <property type="method" value="X-ray"/>
    <property type="resolution" value="2.20 A"/>
    <property type="chains" value="A/B=1-532"/>
</dbReference>
<dbReference type="PDB" id="1YVY">
    <property type="method" value="X-ray"/>
    <property type="resolution" value="2.35 A"/>
    <property type="chains" value="A/B=1-532"/>
</dbReference>
<dbReference type="PDBsum" id="1YTM"/>
<dbReference type="PDBsum" id="1YVY"/>
<dbReference type="SMR" id="O09460"/>
<dbReference type="BRENDA" id="4.1.1.49">
    <property type="organism ID" value="330"/>
</dbReference>
<dbReference type="SABIO-RK" id="O09460"/>
<dbReference type="UniPathway" id="UPA00138"/>
<dbReference type="EvolutionaryTrace" id="O09460"/>
<dbReference type="GO" id="GO:0005829">
    <property type="term" value="C:cytosol"/>
    <property type="evidence" value="ECO:0007669"/>
    <property type="project" value="TreeGrafter"/>
</dbReference>
<dbReference type="GO" id="GO:0005524">
    <property type="term" value="F:ATP binding"/>
    <property type="evidence" value="ECO:0007669"/>
    <property type="project" value="UniProtKB-UniRule"/>
</dbReference>
<dbReference type="GO" id="GO:0046872">
    <property type="term" value="F:metal ion binding"/>
    <property type="evidence" value="ECO:0007669"/>
    <property type="project" value="UniProtKB-KW"/>
</dbReference>
<dbReference type="GO" id="GO:0004612">
    <property type="term" value="F:phosphoenolpyruvate carboxykinase (ATP) activity"/>
    <property type="evidence" value="ECO:0007669"/>
    <property type="project" value="UniProtKB-UniRule"/>
</dbReference>
<dbReference type="GO" id="GO:0006094">
    <property type="term" value="P:gluconeogenesis"/>
    <property type="evidence" value="ECO:0007669"/>
    <property type="project" value="UniProtKB-UniRule"/>
</dbReference>
<dbReference type="CDD" id="cd00484">
    <property type="entry name" value="PEPCK_ATP"/>
    <property type="match status" value="1"/>
</dbReference>
<dbReference type="FunFam" id="2.170.8.10:FF:000001">
    <property type="entry name" value="Phosphoenolpyruvate carboxykinase (ATP)"/>
    <property type="match status" value="1"/>
</dbReference>
<dbReference type="FunFam" id="3.40.449.10:FF:000001">
    <property type="entry name" value="Phosphoenolpyruvate carboxykinase (ATP)"/>
    <property type="match status" value="1"/>
</dbReference>
<dbReference type="Gene3D" id="3.90.228.20">
    <property type="match status" value="1"/>
</dbReference>
<dbReference type="Gene3D" id="3.40.449.10">
    <property type="entry name" value="Phosphoenolpyruvate Carboxykinase, domain 1"/>
    <property type="match status" value="1"/>
</dbReference>
<dbReference type="Gene3D" id="2.170.8.10">
    <property type="entry name" value="Phosphoenolpyruvate Carboxykinase, domain 2"/>
    <property type="match status" value="1"/>
</dbReference>
<dbReference type="HAMAP" id="MF_00453">
    <property type="entry name" value="PEPCK_ATP"/>
    <property type="match status" value="1"/>
</dbReference>
<dbReference type="InterPro" id="IPR001272">
    <property type="entry name" value="PEP_carboxykinase_ATP"/>
</dbReference>
<dbReference type="InterPro" id="IPR013035">
    <property type="entry name" value="PEP_carboxykinase_C"/>
</dbReference>
<dbReference type="InterPro" id="IPR008210">
    <property type="entry name" value="PEP_carboxykinase_N"/>
</dbReference>
<dbReference type="InterPro" id="IPR015994">
    <property type="entry name" value="PEPCK_ATP_CS"/>
</dbReference>
<dbReference type="NCBIfam" id="TIGR00224">
    <property type="entry name" value="pckA"/>
    <property type="match status" value="1"/>
</dbReference>
<dbReference type="NCBIfam" id="NF006819">
    <property type="entry name" value="PRK09344.1-1"/>
    <property type="match status" value="1"/>
</dbReference>
<dbReference type="NCBIfam" id="NF006820">
    <property type="entry name" value="PRK09344.1-2"/>
    <property type="match status" value="1"/>
</dbReference>
<dbReference type="NCBIfam" id="NF006821">
    <property type="entry name" value="PRK09344.1-3"/>
    <property type="match status" value="1"/>
</dbReference>
<dbReference type="PANTHER" id="PTHR30031:SF0">
    <property type="entry name" value="PHOSPHOENOLPYRUVATE CARBOXYKINASE (ATP)"/>
    <property type="match status" value="1"/>
</dbReference>
<dbReference type="PANTHER" id="PTHR30031">
    <property type="entry name" value="PHOSPHOENOLPYRUVATE CARBOXYKINASE ATP"/>
    <property type="match status" value="1"/>
</dbReference>
<dbReference type="Pfam" id="PF01293">
    <property type="entry name" value="PEPCK_ATP"/>
    <property type="match status" value="1"/>
</dbReference>
<dbReference type="PIRSF" id="PIRSF006294">
    <property type="entry name" value="PEP_crbxkin"/>
    <property type="match status" value="1"/>
</dbReference>
<dbReference type="SUPFAM" id="SSF68923">
    <property type="entry name" value="PEP carboxykinase N-terminal domain"/>
    <property type="match status" value="1"/>
</dbReference>
<dbReference type="SUPFAM" id="SSF53795">
    <property type="entry name" value="PEP carboxykinase-like"/>
    <property type="match status" value="1"/>
</dbReference>
<dbReference type="PROSITE" id="PS00532">
    <property type="entry name" value="PEPCK_ATP"/>
    <property type="match status" value="1"/>
</dbReference>
<sequence length="532" mass="58643">MSLSESLAKYGITGATNIVHNPSHEELFAAETQASLEGFEKGTVTEMGAVNVMTGVYTGRSPKDKFIVKNEASKEIWWTSDEFKNDNKPVTEEAWAQLKALAGKELSNKPLYVVDLFCGANENTRLKIRFVMEVAWQAHFVTNMFIRPTEEELKGFEPDFVVLNASKAKVENFKELGLNSETAVVFNLAEKMQIILNTWYGGEMKKGMFSMMNFYLPLQGIAAMHCSANTDLEGKNTAIFFGLSGTGKTTLSTDPKRLLIGDDEHGWDDDGVFNFEGGCYAKVINLSKENEPDIWGAIKRNALLENVTVDANGKVDFADKSVTENTRVSYPIFHIKNIVKPVSKAPAAKRVIFLSADAFGVLPPVSILSKEQTKYYFLSGFTAKLAGTERGITEPTPTFSSCFGAAFLTLPPTKYAEVLVKRMEASGAKAYLVNTGWNGTGKRISIKDTRGIIDAILDGSIDTANTATIPYFNFTVPTELKGVDTKILDPRNTYADASEWEVKAKDLAERFQKNFKKFESLGGDLVKAGPQL</sequence>
<evidence type="ECO:0000250" key="1"/>
<evidence type="ECO:0000255" key="2">
    <source>
        <dbReference type="HAMAP-Rule" id="MF_00453"/>
    </source>
</evidence>
<evidence type="ECO:0000269" key="3">
    <source>
    </source>
</evidence>
<evidence type="ECO:0000269" key="4">
    <source>
    </source>
</evidence>
<evidence type="ECO:0000269" key="5">
    <source>
    </source>
</evidence>
<evidence type="ECO:0000305" key="6">
    <source>
    </source>
</evidence>
<evidence type="ECO:0007829" key="7">
    <source>
        <dbReference type="PDB" id="1YTM"/>
    </source>
</evidence>
<protein>
    <recommendedName>
        <fullName evidence="2">Phosphoenolpyruvate carboxykinase (ATP)</fullName>
        <shortName evidence="2">PCK</shortName>
        <shortName evidence="2">PEP carboxykinase</shortName>
        <shortName evidence="2">PEPCK</shortName>
        <ecNumber evidence="2">4.1.1.49</ecNumber>
    </recommendedName>
</protein>